<comment type="function">
    <text>Involved in oxygen transport from the lung to the various peripheral tissues.</text>
</comment>
<comment type="subunit">
    <text>Heterotetramer of two alpha chains and two beta chains.</text>
</comment>
<comment type="tissue specificity">
    <text>Red blood cells.</text>
</comment>
<comment type="similarity">
    <text evidence="1">Belongs to the globin family.</text>
</comment>
<keyword id="KW-0002">3D-structure</keyword>
<keyword id="KW-0903">Direct protein sequencing</keyword>
<keyword id="KW-0349">Heme</keyword>
<keyword id="KW-0408">Iron</keyword>
<keyword id="KW-0479">Metal-binding</keyword>
<keyword id="KW-0561">Oxygen transport</keyword>
<keyword id="KW-0813">Transport</keyword>
<sequence length="142" mass="15273">MVLSANDKSNVKAVFAKIGGQAGDLGGEALERLFITYPQTKTYFPHFDLSHGSAQIKGHGKKVAEALVEAANHIDDIAGALSKLSDLHAQKLRVDPVNFKLLGHCFLVVVAVHFPSLLTPEVHASLDKFVLAVGTVLTAKYR</sequence>
<feature type="initiator methionine" description="Removed" evidence="2">
    <location>
        <position position="1"/>
    </location>
</feature>
<feature type="chain" id="PRO_0000052605" description="Hemoglobin subunit alpha-A">
    <location>
        <begin position="2"/>
        <end position="142"/>
    </location>
</feature>
<feature type="domain" description="Globin" evidence="1">
    <location>
        <begin position="2"/>
        <end position="142"/>
    </location>
</feature>
<feature type="binding site" evidence="1">
    <location>
        <position position="59"/>
    </location>
    <ligand>
        <name>O2</name>
        <dbReference type="ChEBI" id="CHEBI:15379"/>
    </ligand>
</feature>
<feature type="binding site" description="proximal binding residue" evidence="1">
    <location>
        <position position="88"/>
    </location>
    <ligand>
        <name>heme b</name>
        <dbReference type="ChEBI" id="CHEBI:60344"/>
    </ligand>
    <ligandPart>
        <name>Fe</name>
        <dbReference type="ChEBI" id="CHEBI:18248"/>
    </ligandPart>
</feature>
<feature type="sequence conflict" description="In Ref. 4; AAA49449." evidence="3" ref="4">
    <original>S</original>
    <variation>N</variation>
    <location>
        <position position="9"/>
    </location>
</feature>
<feature type="sequence conflict" description="In Ref. 4; AAA49449." evidence="3" ref="4">
    <original>VFAKIGG</original>
    <variation>IFGKIAA</variation>
    <location>
        <begin position="14"/>
        <end position="20"/>
    </location>
</feature>
<feature type="sequence conflict" description="In Ref. 2; BAA19669." evidence="3" ref="2">
    <original>A</original>
    <variation>G</variation>
    <location>
        <position position="16"/>
    </location>
</feature>
<feature type="sequence conflict" description="In Ref. 4; AAA49449." evidence="3" ref="4">
    <original>A</original>
    <variation>V</variation>
    <location>
        <position position="29"/>
    </location>
</feature>
<feature type="sequence conflict" description="In Ref. 4." evidence="3" ref="4">
    <original>V</original>
    <variation>L</variation>
    <location>
        <position position="130"/>
    </location>
</feature>
<feature type="sequence conflict" description="In Ref. 2 and 4." evidence="3" ref="2 4">
    <original>L</original>
    <variation>C</variation>
    <location>
        <position position="131"/>
    </location>
</feature>
<feature type="sequence conflict" description="In Ref. 4; AAA49449." evidence="3" ref="4">
    <original>V</original>
    <variation>P</variation>
    <location>
        <position position="136"/>
    </location>
</feature>
<feature type="helix" evidence="4">
    <location>
        <begin position="5"/>
        <end position="18"/>
    </location>
</feature>
<feature type="turn" evidence="4">
    <location>
        <begin position="19"/>
        <end position="21"/>
    </location>
</feature>
<feature type="helix" evidence="4">
    <location>
        <begin position="22"/>
        <end position="36"/>
    </location>
</feature>
<feature type="helix" evidence="4">
    <location>
        <begin position="38"/>
        <end position="43"/>
    </location>
</feature>
<feature type="helix" evidence="4">
    <location>
        <begin position="54"/>
        <end position="72"/>
    </location>
</feature>
<feature type="turn" evidence="4">
    <location>
        <begin position="73"/>
        <end position="75"/>
    </location>
</feature>
<feature type="helix" evidence="4">
    <location>
        <begin position="77"/>
        <end position="80"/>
    </location>
</feature>
<feature type="helix" evidence="4">
    <location>
        <begin position="82"/>
        <end position="89"/>
    </location>
</feature>
<feature type="helix" evidence="4">
    <location>
        <begin position="97"/>
        <end position="113"/>
    </location>
</feature>
<feature type="turn" evidence="4">
    <location>
        <begin position="115"/>
        <end position="117"/>
    </location>
</feature>
<feature type="helix" evidence="4">
    <location>
        <begin position="120"/>
        <end position="137"/>
    </location>
</feature>
<feature type="helix" evidence="4">
    <location>
        <begin position="138"/>
        <end position="141"/>
    </location>
</feature>
<accession>P21871</accession>
<accession>O12986</accession>
<accession>Q91249</accession>
<reference key="1">
    <citation type="journal article" date="1990" name="Nucleic Acids Res.">
        <title>Complete nucleotide sequence of a pigeon alpha-globin cDNA.</title>
        <authorList>
            <person name="Eguchi Y."/>
            <person name="Nakashima Y."/>
            <person name="Oshiro M."/>
            <person name="Takei H."/>
        </authorList>
    </citation>
    <scope>NUCLEOTIDE SEQUENCE [MRNA]</scope>
</reference>
<reference key="2">
    <citation type="journal article" date="1997" name="Biochem. Biophys. Res. Commun.">
        <title>Isolation and sequencing of two alpha-globin genes alpha(A) and alpha(D) in pigeon and evidence for embryo-specific expression of the alpha(D)-globin gene.</title>
        <authorList>
            <person name="Ikehara T."/>
            <person name="Eguchi Y."/>
            <person name="Kayo S."/>
            <person name="Takei H."/>
        </authorList>
    </citation>
    <scope>NUCLEOTIDE SEQUENCE [GENOMIC DNA]</scope>
</reference>
<reference key="3">
    <citation type="journal article" date="1989" name="J. Protein Chem.">
        <title>Primary structure of hemoglobin alpha-chain of Columba livia (gray wild pigeon).</title>
        <authorList>
            <person name="Sultana C."/>
            <person name="Abbasi A."/>
            <person name="Zaidi Z.H."/>
        </authorList>
    </citation>
    <scope>PROTEIN SEQUENCE OF 2-142</scope>
</reference>
<reference key="4">
    <citation type="journal article" date="1983" name="Gene">
        <title>Nucleotide sequence of the anemic pigeon alpha-globin gene. Structural rearrangements in the cloned cDNA.</title>
        <authorList>
            <person name="Pletnev A.G."/>
            <person name="Scobeleva N.A."/>
            <person name="Frolova L.Y."/>
            <person name="Kisselev L.L."/>
        </authorList>
    </citation>
    <scope>NUCLEOTIDE SEQUENCE [MRNA] OF 1-136</scope>
</reference>
<organism>
    <name type="scientific">Columba livia</name>
    <name type="common">Rock dove</name>
    <dbReference type="NCBI Taxonomy" id="8932"/>
    <lineage>
        <taxon>Eukaryota</taxon>
        <taxon>Metazoa</taxon>
        <taxon>Chordata</taxon>
        <taxon>Craniata</taxon>
        <taxon>Vertebrata</taxon>
        <taxon>Euteleostomi</taxon>
        <taxon>Archelosauria</taxon>
        <taxon>Archosauria</taxon>
        <taxon>Dinosauria</taxon>
        <taxon>Saurischia</taxon>
        <taxon>Theropoda</taxon>
        <taxon>Coelurosauria</taxon>
        <taxon>Aves</taxon>
        <taxon>Neognathae</taxon>
        <taxon>Neoaves</taxon>
        <taxon>Columbimorphae</taxon>
        <taxon>Columbiformes</taxon>
        <taxon>Columbidae</taxon>
        <taxon>Columba</taxon>
    </lineage>
</organism>
<gene>
    <name type="primary">HBAA</name>
</gene>
<proteinExistence type="evidence at protein level"/>
<protein>
    <recommendedName>
        <fullName>Hemoglobin subunit alpha-A</fullName>
    </recommendedName>
    <alternativeName>
        <fullName>Alpha-A-globin</fullName>
    </alternativeName>
    <alternativeName>
        <fullName>Hemoglobin alpha-A chain</fullName>
    </alternativeName>
</protein>
<name>HBA_COLLI</name>
<dbReference type="EMBL" id="X56349">
    <property type="protein sequence ID" value="CAA39793.1"/>
    <property type="molecule type" value="mRNA"/>
</dbReference>
<dbReference type="EMBL" id="AB001981">
    <property type="protein sequence ID" value="BAA19669.1"/>
    <property type="molecule type" value="Genomic_DNA"/>
</dbReference>
<dbReference type="EMBL" id="K01179">
    <property type="protein sequence ID" value="AAA49449.1"/>
    <property type="molecule type" value="mRNA"/>
</dbReference>
<dbReference type="PIR" id="JC5514">
    <property type="entry name" value="JC5514"/>
</dbReference>
<dbReference type="PDB" id="2R80">
    <property type="method" value="X-ray"/>
    <property type="resolution" value="1.44 A"/>
    <property type="chains" value="A/C=2-142"/>
</dbReference>
<dbReference type="PDB" id="3DHR">
    <property type="method" value="X-ray"/>
    <property type="resolution" value="2.00 A"/>
    <property type="chains" value="A/C/E/G=1-142"/>
</dbReference>
<dbReference type="PDB" id="3MJU">
    <property type="method" value="X-ray"/>
    <property type="resolution" value="3.50 A"/>
    <property type="chains" value="A=2-142"/>
</dbReference>
<dbReference type="PDBsum" id="2R80"/>
<dbReference type="PDBsum" id="3DHR"/>
<dbReference type="PDBsum" id="3MJU"/>
<dbReference type="SMR" id="P21871"/>
<dbReference type="GeneID" id="102090851"/>
<dbReference type="KEGG" id="clv:102090851"/>
<dbReference type="eggNOG" id="KOG3378">
    <property type="taxonomic scope" value="Eukaryota"/>
</dbReference>
<dbReference type="OrthoDB" id="27679at8782"/>
<dbReference type="EvolutionaryTrace" id="P21871"/>
<dbReference type="GO" id="GO:0072562">
    <property type="term" value="C:blood microparticle"/>
    <property type="evidence" value="ECO:0007669"/>
    <property type="project" value="TreeGrafter"/>
</dbReference>
<dbReference type="GO" id="GO:0031838">
    <property type="term" value="C:haptoglobin-hemoglobin complex"/>
    <property type="evidence" value="ECO:0007669"/>
    <property type="project" value="TreeGrafter"/>
</dbReference>
<dbReference type="GO" id="GO:0005833">
    <property type="term" value="C:hemoglobin complex"/>
    <property type="evidence" value="ECO:0007669"/>
    <property type="project" value="InterPro"/>
</dbReference>
<dbReference type="GO" id="GO:0031720">
    <property type="term" value="F:haptoglobin binding"/>
    <property type="evidence" value="ECO:0007669"/>
    <property type="project" value="TreeGrafter"/>
</dbReference>
<dbReference type="GO" id="GO:0020037">
    <property type="term" value="F:heme binding"/>
    <property type="evidence" value="ECO:0007669"/>
    <property type="project" value="InterPro"/>
</dbReference>
<dbReference type="GO" id="GO:0005506">
    <property type="term" value="F:iron ion binding"/>
    <property type="evidence" value="ECO:0007669"/>
    <property type="project" value="InterPro"/>
</dbReference>
<dbReference type="GO" id="GO:0043177">
    <property type="term" value="F:organic acid binding"/>
    <property type="evidence" value="ECO:0007669"/>
    <property type="project" value="TreeGrafter"/>
</dbReference>
<dbReference type="GO" id="GO:0019825">
    <property type="term" value="F:oxygen binding"/>
    <property type="evidence" value="ECO:0007669"/>
    <property type="project" value="InterPro"/>
</dbReference>
<dbReference type="GO" id="GO:0005344">
    <property type="term" value="F:oxygen carrier activity"/>
    <property type="evidence" value="ECO:0007669"/>
    <property type="project" value="UniProtKB-KW"/>
</dbReference>
<dbReference type="GO" id="GO:0004601">
    <property type="term" value="F:peroxidase activity"/>
    <property type="evidence" value="ECO:0007669"/>
    <property type="project" value="TreeGrafter"/>
</dbReference>
<dbReference type="GO" id="GO:0042744">
    <property type="term" value="P:hydrogen peroxide catabolic process"/>
    <property type="evidence" value="ECO:0007669"/>
    <property type="project" value="TreeGrafter"/>
</dbReference>
<dbReference type="CDD" id="cd08927">
    <property type="entry name" value="Hb-alpha-like"/>
    <property type="match status" value="1"/>
</dbReference>
<dbReference type="FunFam" id="1.10.490.10:FF:000002">
    <property type="entry name" value="Hemoglobin subunit alpha"/>
    <property type="match status" value="1"/>
</dbReference>
<dbReference type="Gene3D" id="1.10.490.10">
    <property type="entry name" value="Globins"/>
    <property type="match status" value="1"/>
</dbReference>
<dbReference type="InterPro" id="IPR000971">
    <property type="entry name" value="Globin"/>
</dbReference>
<dbReference type="InterPro" id="IPR009050">
    <property type="entry name" value="Globin-like_sf"/>
</dbReference>
<dbReference type="InterPro" id="IPR012292">
    <property type="entry name" value="Globin/Proto"/>
</dbReference>
<dbReference type="InterPro" id="IPR002338">
    <property type="entry name" value="Hemoglobin_a-typ"/>
</dbReference>
<dbReference type="InterPro" id="IPR050056">
    <property type="entry name" value="Hemoglobin_oxygen_transport"/>
</dbReference>
<dbReference type="InterPro" id="IPR002339">
    <property type="entry name" value="Hemoglobin_pi"/>
</dbReference>
<dbReference type="PANTHER" id="PTHR11442">
    <property type="entry name" value="HEMOGLOBIN FAMILY MEMBER"/>
    <property type="match status" value="1"/>
</dbReference>
<dbReference type="PANTHER" id="PTHR11442:SF48">
    <property type="entry name" value="HEMOGLOBIN SUBUNIT ALPHA"/>
    <property type="match status" value="1"/>
</dbReference>
<dbReference type="Pfam" id="PF00042">
    <property type="entry name" value="Globin"/>
    <property type="match status" value="1"/>
</dbReference>
<dbReference type="PRINTS" id="PR00612">
    <property type="entry name" value="ALPHAHAEM"/>
</dbReference>
<dbReference type="PRINTS" id="PR00815">
    <property type="entry name" value="PIHAEM"/>
</dbReference>
<dbReference type="SUPFAM" id="SSF46458">
    <property type="entry name" value="Globin-like"/>
    <property type="match status" value="1"/>
</dbReference>
<dbReference type="PROSITE" id="PS01033">
    <property type="entry name" value="GLOBIN"/>
    <property type="match status" value="1"/>
</dbReference>
<evidence type="ECO:0000255" key="1">
    <source>
        <dbReference type="PROSITE-ProRule" id="PRU00238"/>
    </source>
</evidence>
<evidence type="ECO:0000269" key="2">
    <source>
    </source>
</evidence>
<evidence type="ECO:0000305" key="3"/>
<evidence type="ECO:0007829" key="4">
    <source>
        <dbReference type="PDB" id="2R80"/>
    </source>
</evidence>